<proteinExistence type="inferred from homology"/>
<sequence>MDSRPQKVWMTPSLTESDMDYHKILTAGLSVQQGIVRQRVIPVYQVNNLEEICQLIIQAFEAGVDFQESADSFLLMLCLHHAYQGDYKLFLESGAVKYLEGHGFRFEVKKRDGVKRLEELLPAVSSGKNIKRTLAAMPEEETTEANAGQFLSFASLFLPKLVVGEKACLRKVQRQIQVHAEQGLIQYPTAWQSVGHMMVIFRLMRTNFLIKFLLIHQGMHMVAGHDANDAVISNSVAQARFSGLLIVKTVLDHILQKTQRGVRLHPLARTAKVKNEVNSLKAALSSLAKHGEYAPFARLLNLSGVNNLEHGLFPQLSAIALGVATAHGSTLAGVNVGEQYQQLREAATEAEKQLQQYAESRELDHLGLDDQEKKILMNFHQKKNEISFQQTNAMVTLKKERLAKLTEAITAASLPKTSGHYDDDDDIPFPGPINDDDNPGHQDDDPTDSQDTTIPDVVVDPDDGSYGEYQSYSENGMNAPDDLVLFDLDEDDEDTKPVPNRSTKGGQQKNSQKGQHTEGRQTQSRPTQNIPGPHRTIHHASAPLTDNDRRNEPSGSTSPRMLTPINEEADPLDDADDETSSLPPLESDDEEQDRDGTSNRTPTVAPPAPVYRDHSEKKELPQDERQDQDHTQEARNQDSDNTQPEHSFEEMYRHILRSQGPFDAVLYYHMMKDEPVVFSTSDGKEYTYPDSLEEEYPPWLTEKEAMNEENTFVTLDGQQFYWPVMNHKDKFMAILQHHQ</sequence>
<keyword id="KW-0167">Capsid protein</keyword>
<keyword id="KW-0175">Coiled coil</keyword>
<keyword id="KW-1139">Helical capsid protein</keyword>
<keyword id="KW-1035">Host cytoplasm</keyword>
<keyword id="KW-0597">Phosphoprotein</keyword>
<keyword id="KW-0687">Ribonucleoprotein</keyword>
<keyword id="KW-0694">RNA-binding</keyword>
<keyword id="KW-0543">Viral nucleoprotein</keyword>
<keyword id="KW-0946">Virion</keyword>
<organism>
    <name type="scientific">Zaire ebolavirus (strain Gabon-94)</name>
    <name type="common">ZEBOV</name>
    <name type="synonym">Zaire Ebola virus</name>
    <dbReference type="NCBI Taxonomy" id="128947"/>
    <lineage>
        <taxon>Viruses</taxon>
        <taxon>Riboviria</taxon>
        <taxon>Orthornavirae</taxon>
        <taxon>Negarnaviricota</taxon>
        <taxon>Haploviricotina</taxon>
        <taxon>Monjiviricetes</taxon>
        <taxon>Mononegavirales</taxon>
        <taxon>Filoviridae</taxon>
        <taxon>Orthoebolavirus</taxon>
        <taxon>Orthoebolavirus zairense</taxon>
        <taxon>Zaire ebolavirus</taxon>
    </lineage>
</organism>
<comment type="function">
    <text evidence="1">Oligomerizes into helical capsid to encapsidate the viral genome, protecting it from nucleases and the cellular innate immune response. VP35 binds to and stabilizes monomeric NP, keeping it soluble. Upon virus replication, NP is recruited to bind cooperatively viral genomic RNA and VP35 is released. The encapsidated genomic RNA is termed the nucleocapsid and serves as template for transcription and replication. The nucleocapsid is helical with a pitch of 10.81 NP per turn and a diameter of about 22nm. Each NP binds to six nucleotides of viral genomic RNA, three being exposed to the solvant and three hidden into the nucleocapsid. Also recruits host PPP2R5C phosphatase to dephosphorylate VP30 and thereby promote viral transcription. Upon virion assembly and budding, NP binds to VP24 and possibly host STAU1.</text>
</comment>
<comment type="subunit">
    <text evidence="1">Homooligomer. Homomultimerizes to form the nucleocapsid. Binds to viral genomic RNA. Interacts with VP35 and VP30 to form the nucleocapsid. Interacts with host PPP2R5C; this interaction leads to VP30 dephosphorylation and viral transcription. Interacts with VP24; this interaction facilitates nucleocapsid assembly and genome packaging. Interacts with matrix protein VP40; this interaction allows recruitment of the nucleocapsid into progeny virions. Interacts with host STAU1. Interacts with host NXF1 (via RNA-binding domain); this interaction recruits NXF1 to the inclusion bodies were viral replication takes place, probably to export viral mRNA-NXF1 complexes from these sites. Interacts with host CCDC92; this interaction sequesters NP in the host cytoplasm. Interacts with host TRIM14.</text>
</comment>
<comment type="subcellular location">
    <subcellularLocation>
        <location evidence="1">Virion</location>
    </subcellularLocation>
    <subcellularLocation>
        <location evidence="1">Host cytoplasm</location>
    </subcellularLocation>
</comment>
<comment type="domain">
    <text evidence="1">Comprizes a N-terminal arm involved in oligomerization, a NP core region involved in RNA binding, a disordered region follwoed by a C-terminal tail involved in protein-protein interactions. During oligomerization, NP N-terminal arm binds to a neighbor NP thereby displacing VP35 bound to monomeric NP.</text>
</comment>
<comment type="PTM">
    <text evidence="1">Phosphorylated and O-glycosylated by host. Acetylated by host EP300 in vitro.</text>
</comment>
<comment type="similarity">
    <text evidence="4">Belongs to the filoviruses nucleoprotein family.</text>
</comment>
<accession>Q9QCE9</accession>
<feature type="chain" id="PRO_0000222173" description="Nucleoprotein">
    <location>
        <begin position="1"/>
        <end position="739"/>
    </location>
</feature>
<feature type="region of interest" description="Disordered" evidence="3">
    <location>
        <begin position="415"/>
        <end position="646"/>
    </location>
</feature>
<feature type="coiled-coil region" evidence="2">
    <location>
        <begin position="334"/>
        <end position="363"/>
    </location>
</feature>
<feature type="compositionally biased region" description="Low complexity" evidence="3">
    <location>
        <begin position="449"/>
        <end position="458"/>
    </location>
</feature>
<feature type="compositionally biased region" description="Low complexity" evidence="3">
    <location>
        <begin position="504"/>
        <end position="514"/>
    </location>
</feature>
<feature type="compositionally biased region" description="Polar residues" evidence="3">
    <location>
        <begin position="520"/>
        <end position="530"/>
    </location>
</feature>
<feature type="compositionally biased region" description="Acidic residues" evidence="3">
    <location>
        <begin position="567"/>
        <end position="579"/>
    </location>
</feature>
<feature type="compositionally biased region" description="Basic and acidic residues" evidence="3">
    <location>
        <begin position="611"/>
        <end position="638"/>
    </location>
</feature>
<gene>
    <name type="primary">NP</name>
</gene>
<reference key="1">
    <citation type="journal article" date="1998" name="J. Gen. Virol.">
        <title>Recombinant Ebola virus nucleoprotein and glycoprotein (Gabon 94 strain) provide new tools for the detection of human infections.</title>
        <authorList>
            <person name="Prehaud C.J.C."/>
            <person name="Hellebrand E."/>
            <person name="Coudrier D."/>
            <person name="Volchkov V.E."/>
            <person name="Volchkova V.A."/>
            <person name="Feldmann B."/>
            <person name="Le Guenno B."/>
            <person name="Bouloy M."/>
        </authorList>
    </citation>
    <scope>NUCLEOTIDE SEQUENCE [GENOMIC RNA]</scope>
</reference>
<name>NCAP_EBOG4</name>
<evidence type="ECO:0000250" key="1">
    <source>
        <dbReference type="UniProtKB" id="P18272"/>
    </source>
</evidence>
<evidence type="ECO:0000255" key="2"/>
<evidence type="ECO:0000256" key="3">
    <source>
        <dbReference type="SAM" id="MobiDB-lite"/>
    </source>
</evidence>
<evidence type="ECO:0000305" key="4"/>
<dbReference type="EMBL" id="Y09358">
    <property type="protein sequence ID" value="CAA70541.1"/>
    <property type="molecule type" value="Genomic_RNA"/>
</dbReference>
<dbReference type="SMR" id="Q9QCE9"/>
<dbReference type="GO" id="GO:0019029">
    <property type="term" value="C:helical viral capsid"/>
    <property type="evidence" value="ECO:0007669"/>
    <property type="project" value="UniProtKB-KW"/>
</dbReference>
<dbReference type="GO" id="GO:0030430">
    <property type="term" value="C:host cell cytoplasm"/>
    <property type="evidence" value="ECO:0007669"/>
    <property type="project" value="UniProtKB-SubCell"/>
</dbReference>
<dbReference type="GO" id="GO:1990904">
    <property type="term" value="C:ribonucleoprotein complex"/>
    <property type="evidence" value="ECO:0007669"/>
    <property type="project" value="UniProtKB-KW"/>
</dbReference>
<dbReference type="GO" id="GO:0019013">
    <property type="term" value="C:viral nucleocapsid"/>
    <property type="evidence" value="ECO:0007669"/>
    <property type="project" value="UniProtKB-KW"/>
</dbReference>
<dbReference type="GO" id="GO:0003723">
    <property type="term" value="F:RNA binding"/>
    <property type="evidence" value="ECO:0007669"/>
    <property type="project" value="UniProtKB-KW"/>
</dbReference>
<dbReference type="GO" id="GO:0019074">
    <property type="term" value="P:viral RNA genome packaging"/>
    <property type="evidence" value="ECO:0007669"/>
    <property type="project" value="InterPro"/>
</dbReference>
<dbReference type="Gene3D" id="1.20.120.1160">
    <property type="match status" value="1"/>
</dbReference>
<dbReference type="InterPro" id="IPR008609">
    <property type="entry name" value="Ebola_NP"/>
</dbReference>
<dbReference type="Pfam" id="PF05505">
    <property type="entry name" value="Ebola_NP"/>
    <property type="match status" value="1"/>
</dbReference>
<dbReference type="PIRSF" id="PIRSF003900">
    <property type="entry name" value="N_FiloV"/>
    <property type="match status" value="1"/>
</dbReference>
<organismHost>
    <name type="scientific">Epomops franqueti</name>
    <name type="common">Franquet's epauletted fruit bat</name>
    <name type="synonym">Epomophorus franqueti</name>
    <dbReference type="NCBI Taxonomy" id="77231"/>
</organismHost>
<organismHost>
    <name type="scientific">Homo sapiens</name>
    <name type="common">Human</name>
    <dbReference type="NCBI Taxonomy" id="9606"/>
</organismHost>
<organismHost>
    <name type="scientific">Myonycteris torquata</name>
    <name type="common">Little collared fruit bat</name>
    <dbReference type="NCBI Taxonomy" id="77243"/>
</organismHost>
<protein>
    <recommendedName>
        <fullName>Nucleoprotein</fullName>
    </recommendedName>
    <alternativeName>
        <fullName>Ebola NP</fullName>
        <shortName>eNP</shortName>
    </alternativeName>
    <alternativeName>
        <fullName>Nucleocapsid protein</fullName>
        <shortName>Protein N</shortName>
    </alternativeName>
</protein>